<name>ACCA_RHILO</name>
<dbReference type="EC" id="2.1.3.15" evidence="1"/>
<dbReference type="EMBL" id="BA000012">
    <property type="protein sequence ID" value="BAB50439.1"/>
    <property type="molecule type" value="Genomic_DNA"/>
</dbReference>
<dbReference type="RefSeq" id="WP_010911785.1">
    <property type="nucleotide sequence ID" value="NC_002678.2"/>
</dbReference>
<dbReference type="SMR" id="Q98FX7"/>
<dbReference type="KEGG" id="mlo:mlr3576"/>
<dbReference type="eggNOG" id="COG0825">
    <property type="taxonomic scope" value="Bacteria"/>
</dbReference>
<dbReference type="HOGENOM" id="CLU_015486_0_2_5"/>
<dbReference type="UniPathway" id="UPA00655">
    <property type="reaction ID" value="UER00711"/>
</dbReference>
<dbReference type="Proteomes" id="UP000000552">
    <property type="component" value="Chromosome"/>
</dbReference>
<dbReference type="GO" id="GO:0009317">
    <property type="term" value="C:acetyl-CoA carboxylase complex"/>
    <property type="evidence" value="ECO:0007669"/>
    <property type="project" value="InterPro"/>
</dbReference>
<dbReference type="GO" id="GO:0003989">
    <property type="term" value="F:acetyl-CoA carboxylase activity"/>
    <property type="evidence" value="ECO:0007669"/>
    <property type="project" value="InterPro"/>
</dbReference>
<dbReference type="GO" id="GO:0005524">
    <property type="term" value="F:ATP binding"/>
    <property type="evidence" value="ECO:0007669"/>
    <property type="project" value="UniProtKB-KW"/>
</dbReference>
<dbReference type="GO" id="GO:0016743">
    <property type="term" value="F:carboxyl- or carbamoyltransferase activity"/>
    <property type="evidence" value="ECO:0007669"/>
    <property type="project" value="UniProtKB-UniRule"/>
</dbReference>
<dbReference type="GO" id="GO:0006633">
    <property type="term" value="P:fatty acid biosynthetic process"/>
    <property type="evidence" value="ECO:0007669"/>
    <property type="project" value="UniProtKB-KW"/>
</dbReference>
<dbReference type="GO" id="GO:2001295">
    <property type="term" value="P:malonyl-CoA biosynthetic process"/>
    <property type="evidence" value="ECO:0007669"/>
    <property type="project" value="UniProtKB-UniRule"/>
</dbReference>
<dbReference type="Gene3D" id="3.90.226.10">
    <property type="entry name" value="2-enoyl-CoA Hydratase, Chain A, domain 1"/>
    <property type="match status" value="1"/>
</dbReference>
<dbReference type="HAMAP" id="MF_00823">
    <property type="entry name" value="AcetylCoA_CT_alpha"/>
    <property type="match status" value="1"/>
</dbReference>
<dbReference type="InterPro" id="IPR001095">
    <property type="entry name" value="Acetyl_CoA_COase_a_su"/>
</dbReference>
<dbReference type="InterPro" id="IPR029045">
    <property type="entry name" value="ClpP/crotonase-like_dom_sf"/>
</dbReference>
<dbReference type="InterPro" id="IPR011763">
    <property type="entry name" value="COA_CT_C"/>
</dbReference>
<dbReference type="NCBIfam" id="TIGR00513">
    <property type="entry name" value="accA"/>
    <property type="match status" value="1"/>
</dbReference>
<dbReference type="NCBIfam" id="NF041504">
    <property type="entry name" value="AccA_sub"/>
    <property type="match status" value="1"/>
</dbReference>
<dbReference type="NCBIfam" id="NF004344">
    <property type="entry name" value="PRK05724.1"/>
    <property type="match status" value="1"/>
</dbReference>
<dbReference type="PANTHER" id="PTHR42853">
    <property type="entry name" value="ACETYL-COENZYME A CARBOXYLASE CARBOXYL TRANSFERASE SUBUNIT ALPHA"/>
    <property type="match status" value="1"/>
</dbReference>
<dbReference type="PANTHER" id="PTHR42853:SF3">
    <property type="entry name" value="ACETYL-COENZYME A CARBOXYLASE CARBOXYL TRANSFERASE SUBUNIT ALPHA, CHLOROPLASTIC"/>
    <property type="match status" value="1"/>
</dbReference>
<dbReference type="Pfam" id="PF03255">
    <property type="entry name" value="ACCA"/>
    <property type="match status" value="1"/>
</dbReference>
<dbReference type="PRINTS" id="PR01069">
    <property type="entry name" value="ACCCTRFRASEA"/>
</dbReference>
<dbReference type="SUPFAM" id="SSF52096">
    <property type="entry name" value="ClpP/crotonase"/>
    <property type="match status" value="1"/>
</dbReference>
<dbReference type="PROSITE" id="PS50989">
    <property type="entry name" value="COA_CT_CTER"/>
    <property type="match status" value="1"/>
</dbReference>
<gene>
    <name evidence="1" type="primary">accA</name>
    <name type="ordered locus">mlr3576</name>
</gene>
<feature type="chain" id="PRO_0000223815" description="Acetyl-coenzyme A carboxylase carboxyl transferase subunit alpha">
    <location>
        <begin position="1"/>
        <end position="316"/>
    </location>
</feature>
<feature type="domain" description="CoA carboxyltransferase C-terminal" evidence="2">
    <location>
        <begin position="40"/>
        <end position="293"/>
    </location>
</feature>
<sequence>MYNYLDFEKPVQDLELKILELKKLAENGEAVDVADEITRLEKRSRDALRDLYKALTPWQKVQVARHSDRPHCVDYIKGLFSDFTPLAGDRNFGEDQAIVGGFARFRGEPVAIIGQEKGSDTTSRLRHNFGSVRPEGYRKAVRLMELADRFKIPLLTLVDTAGAYPGVGAEERGQAEAIARSTSACLALKVPSISVVIGEGGSGGAIAIATANRVYMLEHAIYSVISPEGAASILWRDTTRSKDAATNMKITAQDLLELKIIDAIIPEPMGGAQRAPEKVIAATGDLIAKTMKEFAGANTDFREQRREKYLAMGRSL</sequence>
<proteinExistence type="inferred from homology"/>
<accession>Q98FX7</accession>
<reference key="1">
    <citation type="journal article" date="2000" name="DNA Res.">
        <title>Complete genome structure of the nitrogen-fixing symbiotic bacterium Mesorhizobium loti.</title>
        <authorList>
            <person name="Kaneko T."/>
            <person name="Nakamura Y."/>
            <person name="Sato S."/>
            <person name="Asamizu E."/>
            <person name="Kato T."/>
            <person name="Sasamoto S."/>
            <person name="Watanabe A."/>
            <person name="Idesawa K."/>
            <person name="Ishikawa A."/>
            <person name="Kawashima K."/>
            <person name="Kimura T."/>
            <person name="Kishida Y."/>
            <person name="Kiyokawa C."/>
            <person name="Kohara M."/>
            <person name="Matsumoto M."/>
            <person name="Matsuno A."/>
            <person name="Mochizuki Y."/>
            <person name="Nakayama S."/>
            <person name="Nakazaki N."/>
            <person name="Shimpo S."/>
            <person name="Sugimoto M."/>
            <person name="Takeuchi C."/>
            <person name="Yamada M."/>
            <person name="Tabata S."/>
        </authorList>
    </citation>
    <scope>NUCLEOTIDE SEQUENCE [LARGE SCALE GENOMIC DNA]</scope>
    <source>
        <strain>LMG 29417 / CECT 9101 / MAFF 303099</strain>
    </source>
</reference>
<evidence type="ECO:0000255" key="1">
    <source>
        <dbReference type="HAMAP-Rule" id="MF_00823"/>
    </source>
</evidence>
<evidence type="ECO:0000255" key="2">
    <source>
        <dbReference type="PROSITE-ProRule" id="PRU01137"/>
    </source>
</evidence>
<keyword id="KW-0067">ATP-binding</keyword>
<keyword id="KW-0963">Cytoplasm</keyword>
<keyword id="KW-0275">Fatty acid biosynthesis</keyword>
<keyword id="KW-0276">Fatty acid metabolism</keyword>
<keyword id="KW-0444">Lipid biosynthesis</keyword>
<keyword id="KW-0443">Lipid metabolism</keyword>
<keyword id="KW-0547">Nucleotide-binding</keyword>
<keyword id="KW-0808">Transferase</keyword>
<comment type="function">
    <text evidence="1">Component of the acetyl coenzyme A carboxylase (ACC) complex. First, biotin carboxylase catalyzes the carboxylation of biotin on its carrier protein (BCCP) and then the CO(2) group is transferred by the carboxyltransferase to acetyl-CoA to form malonyl-CoA.</text>
</comment>
<comment type="catalytic activity">
    <reaction evidence="1">
        <text>N(6)-carboxybiotinyl-L-lysyl-[protein] + acetyl-CoA = N(6)-biotinyl-L-lysyl-[protein] + malonyl-CoA</text>
        <dbReference type="Rhea" id="RHEA:54728"/>
        <dbReference type="Rhea" id="RHEA-COMP:10505"/>
        <dbReference type="Rhea" id="RHEA-COMP:10506"/>
        <dbReference type="ChEBI" id="CHEBI:57288"/>
        <dbReference type="ChEBI" id="CHEBI:57384"/>
        <dbReference type="ChEBI" id="CHEBI:83144"/>
        <dbReference type="ChEBI" id="CHEBI:83145"/>
        <dbReference type="EC" id="2.1.3.15"/>
    </reaction>
</comment>
<comment type="pathway">
    <text evidence="1">Lipid metabolism; malonyl-CoA biosynthesis; malonyl-CoA from acetyl-CoA: step 1/1.</text>
</comment>
<comment type="subunit">
    <text evidence="1">Acetyl-CoA carboxylase is a heterohexamer composed of biotin carboxyl carrier protein (AccB), biotin carboxylase (AccC) and two subunits each of ACCase subunit alpha (AccA) and ACCase subunit beta (AccD).</text>
</comment>
<comment type="subcellular location">
    <subcellularLocation>
        <location evidence="1">Cytoplasm</location>
    </subcellularLocation>
</comment>
<comment type="similarity">
    <text evidence="1">Belongs to the AccA family.</text>
</comment>
<protein>
    <recommendedName>
        <fullName evidence="1">Acetyl-coenzyme A carboxylase carboxyl transferase subunit alpha</fullName>
        <shortName evidence="1">ACCase subunit alpha</shortName>
        <shortName evidence="1">Acetyl-CoA carboxylase carboxyltransferase subunit alpha</shortName>
        <ecNumber evidence="1">2.1.3.15</ecNumber>
    </recommendedName>
</protein>
<organism>
    <name type="scientific">Mesorhizobium japonicum (strain LMG 29417 / CECT 9101 / MAFF 303099)</name>
    <name type="common">Mesorhizobium loti (strain MAFF 303099)</name>
    <dbReference type="NCBI Taxonomy" id="266835"/>
    <lineage>
        <taxon>Bacteria</taxon>
        <taxon>Pseudomonadati</taxon>
        <taxon>Pseudomonadota</taxon>
        <taxon>Alphaproteobacteria</taxon>
        <taxon>Hyphomicrobiales</taxon>
        <taxon>Phyllobacteriaceae</taxon>
        <taxon>Mesorhizobium</taxon>
    </lineage>
</organism>